<gene>
    <name type="primary">ICAM1</name>
</gene>
<protein>
    <recommendedName>
        <fullName>Intercellular adhesion molecule 1</fullName>
        <shortName>ICAM-1</shortName>
    </recommendedName>
    <cdAntigenName>CD54</cdAntigenName>
</protein>
<proteinExistence type="evidence at transcript level"/>
<accession>Q95132</accession>
<keyword id="KW-0130">Cell adhesion</keyword>
<keyword id="KW-1015">Disulfide bond</keyword>
<keyword id="KW-0325">Glycoprotein</keyword>
<keyword id="KW-0393">Immunoglobulin domain</keyword>
<keyword id="KW-0472">Membrane</keyword>
<keyword id="KW-0597">Phosphoprotein</keyword>
<keyword id="KW-1185">Reference proteome</keyword>
<keyword id="KW-0677">Repeat</keyword>
<keyword id="KW-0732">Signal</keyword>
<keyword id="KW-0812">Transmembrane</keyword>
<keyword id="KW-1133">Transmembrane helix</keyword>
<keyword id="KW-0832">Ubl conjugation</keyword>
<sequence>MALGAAPAAQLALLALLGTLLPGPGGAGISIHPSKAIIPRGDSLTVNCSNSCDQKSTFGLETVLIKEEVGRGDNWKVFQLRDVQEDIELFCYSNCHKEQTIASMNLTVYWFPEHVELAPLPLWQPVGEELNLSCLVSGGAPRAHLSVVLLRGEEELGRQPVGKGEPAKVMFTVQSRREDHGTNFSCRWELDLRSQGLELFQNTSAPRKLQTYVLPSIDPHLEVPPIVEVGSRWPVNCTLDGLFPASDAKVYLVLGDQKLESNITYDGDSVLAKAWMEENEEGTHSLKCSVTLGEVSRRTQENVTVYSFPLPTLTLSPPEVSEWTTVTVECVTRDGAVVKLNGTSAVPPGPRAQLKLNASASDHRSNFSCSAALEIAGQVVHKHQTLELHVLYGPRLDQRDCPGNWTWQEGSEQTLKCEAQGNPIPKLNCSRKGDGASLPIGDLRPVRREVAGTYLCRATSARGRVTREVVLNVLHGQNILDIVIPVVAVTLILGALGTAGYVYNYQRKIQKYELQKARKAQEEAALKLNAQSTPP</sequence>
<dbReference type="EMBL" id="U65789">
    <property type="protein sequence ID" value="AAB06749.1"/>
    <property type="molecule type" value="mRNA"/>
</dbReference>
<dbReference type="RefSeq" id="NP_776773.1">
    <property type="nucleotide sequence ID" value="NM_174348.2"/>
</dbReference>
<dbReference type="SMR" id="Q95132"/>
<dbReference type="FunCoup" id="Q95132">
    <property type="interactions" value="495"/>
</dbReference>
<dbReference type="STRING" id="9913.ENSBTAP00000013608"/>
<dbReference type="GlyCosmos" id="Q95132">
    <property type="glycosylation" value="13 sites, No reported glycans"/>
</dbReference>
<dbReference type="GlyGen" id="Q95132">
    <property type="glycosylation" value="13 sites"/>
</dbReference>
<dbReference type="PaxDb" id="9913-ENSBTAP00000013608"/>
<dbReference type="GeneID" id="281839"/>
<dbReference type="KEGG" id="bta:281839"/>
<dbReference type="CTD" id="3383"/>
<dbReference type="eggNOG" id="ENOG502S45R">
    <property type="taxonomic scope" value="Eukaryota"/>
</dbReference>
<dbReference type="InParanoid" id="Q95132"/>
<dbReference type="OrthoDB" id="6250964at2759"/>
<dbReference type="Proteomes" id="UP000009136">
    <property type="component" value="Unplaced"/>
</dbReference>
<dbReference type="GO" id="GO:0005886">
    <property type="term" value="C:plasma membrane"/>
    <property type="evidence" value="ECO:0000318"/>
    <property type="project" value="GO_Central"/>
</dbReference>
<dbReference type="GO" id="GO:0005178">
    <property type="term" value="F:integrin binding"/>
    <property type="evidence" value="ECO:0000318"/>
    <property type="project" value="GO_Central"/>
</dbReference>
<dbReference type="GO" id="GO:0007155">
    <property type="term" value="P:cell adhesion"/>
    <property type="evidence" value="ECO:0000318"/>
    <property type="project" value="GO_Central"/>
</dbReference>
<dbReference type="GO" id="GO:0098609">
    <property type="term" value="P:cell-cell adhesion"/>
    <property type="evidence" value="ECO:0007669"/>
    <property type="project" value="InterPro"/>
</dbReference>
<dbReference type="CDD" id="cd20996">
    <property type="entry name" value="IgI_N_ICAM-1"/>
    <property type="match status" value="1"/>
</dbReference>
<dbReference type="FunFam" id="2.60.40.10:FF:000194">
    <property type="entry name" value="Intercellular adhesion molecule 1"/>
    <property type="match status" value="1"/>
</dbReference>
<dbReference type="FunFam" id="2.60.40.10:FF:000459">
    <property type="entry name" value="Intercellular adhesion molecule 1"/>
    <property type="match status" value="1"/>
</dbReference>
<dbReference type="FunFam" id="2.60.40.10:FF:000641">
    <property type="entry name" value="Intercellular adhesion molecule 1"/>
    <property type="match status" value="1"/>
</dbReference>
<dbReference type="FunFam" id="2.60.40.10:FF:000648">
    <property type="entry name" value="Intercellular adhesion molecule 1"/>
    <property type="match status" value="1"/>
</dbReference>
<dbReference type="FunFam" id="2.60.40.10:FF:000338">
    <property type="entry name" value="intercellular adhesion molecule 5"/>
    <property type="match status" value="1"/>
</dbReference>
<dbReference type="Gene3D" id="2.60.40.10">
    <property type="entry name" value="Immunoglobulins"/>
    <property type="match status" value="5"/>
</dbReference>
<dbReference type="InterPro" id="IPR003988">
    <property type="entry name" value="ICAM"/>
</dbReference>
<dbReference type="InterPro" id="IPR048679">
    <property type="entry name" value="ICAM1_3_5_D2"/>
</dbReference>
<dbReference type="InterPro" id="IPR013768">
    <property type="entry name" value="ICAM_N"/>
</dbReference>
<dbReference type="InterPro" id="IPR047012">
    <property type="entry name" value="ICAM_VCAM"/>
</dbReference>
<dbReference type="InterPro" id="IPR003987">
    <property type="entry name" value="ICAM_VCAM_N"/>
</dbReference>
<dbReference type="InterPro" id="IPR007110">
    <property type="entry name" value="Ig-like_dom"/>
</dbReference>
<dbReference type="InterPro" id="IPR036179">
    <property type="entry name" value="Ig-like_dom_sf"/>
</dbReference>
<dbReference type="InterPro" id="IPR013783">
    <property type="entry name" value="Ig-like_fold"/>
</dbReference>
<dbReference type="InterPro" id="IPR003599">
    <property type="entry name" value="Ig_sub"/>
</dbReference>
<dbReference type="PANTHER" id="PTHR13771">
    <property type="entry name" value="INTERCELLULAR ADHESION MOLECULE"/>
    <property type="match status" value="1"/>
</dbReference>
<dbReference type="PANTHER" id="PTHR13771:SF18">
    <property type="entry name" value="INTERCELLULAR ADHESION MOLECULE 1"/>
    <property type="match status" value="1"/>
</dbReference>
<dbReference type="Pfam" id="PF21146">
    <property type="entry name" value="ICAM1_3_5_D2"/>
    <property type="match status" value="1"/>
</dbReference>
<dbReference type="Pfam" id="PF03921">
    <property type="entry name" value="ICAM_N"/>
    <property type="match status" value="1"/>
</dbReference>
<dbReference type="PRINTS" id="PR01473">
    <property type="entry name" value="ICAM"/>
</dbReference>
<dbReference type="PRINTS" id="PR01472">
    <property type="entry name" value="ICAMVCAM1"/>
</dbReference>
<dbReference type="SMART" id="SM00409">
    <property type="entry name" value="IG"/>
    <property type="match status" value="3"/>
</dbReference>
<dbReference type="SUPFAM" id="SSF48726">
    <property type="entry name" value="Immunoglobulin"/>
    <property type="match status" value="5"/>
</dbReference>
<dbReference type="PROSITE" id="PS50835">
    <property type="entry name" value="IG_LIKE"/>
    <property type="match status" value="1"/>
</dbReference>
<reference key="1">
    <citation type="journal article" date="1997" name="Vet. Immunol. Immunopathol.">
        <title>Cloning, sequencing and analysis of cDNA encoding bovine intercellular adhesion molecule-1 (ICAM-1).</title>
        <authorList>
            <person name="Lee E.K."/>
            <person name="Kang S.G."/>
            <person name="Kehrli M.E. Jr."/>
        </authorList>
    </citation>
    <scope>NUCLEOTIDE SEQUENCE [MRNA]</scope>
</reference>
<organism>
    <name type="scientific">Bos taurus</name>
    <name type="common">Bovine</name>
    <dbReference type="NCBI Taxonomy" id="9913"/>
    <lineage>
        <taxon>Eukaryota</taxon>
        <taxon>Metazoa</taxon>
        <taxon>Chordata</taxon>
        <taxon>Craniata</taxon>
        <taxon>Vertebrata</taxon>
        <taxon>Euteleostomi</taxon>
        <taxon>Mammalia</taxon>
        <taxon>Eutheria</taxon>
        <taxon>Laurasiatheria</taxon>
        <taxon>Artiodactyla</taxon>
        <taxon>Ruminantia</taxon>
        <taxon>Pecora</taxon>
        <taxon>Bovidae</taxon>
        <taxon>Bovinae</taxon>
        <taxon>Bos</taxon>
    </lineage>
</organism>
<comment type="function">
    <text evidence="1">ICAM proteins are ligands for the leukocyte adhesion protein LFA-1 (integrin alpha-L/beta-2). During leukocyte trans-endothelial migration, ICAM1 engagement promotes the assembly of endothelial apical cups through ARHGEF26/SGEF and RHOG activation (By similarity).</text>
</comment>
<comment type="subunit">
    <text evidence="2">Homodimer. Interacts with MUC1 and promotes cell aggregation in epithelial cells. Interacts with ARHGEF26/SGEF. Interacts (on T cell side) with CD81, CD247 and CD9 at immunological synapses between antigen-presenting cells and T cells.</text>
</comment>
<comment type="subcellular location">
    <subcellularLocation>
        <location>Membrane</location>
        <topology>Single-pass type I membrane protein</topology>
    </subcellularLocation>
</comment>
<comment type="PTM">
    <text evidence="1">Monoubiquitinated, which is promoted by MARCH9 and leads to endocytosis.</text>
</comment>
<comment type="similarity">
    <text evidence="5">Belongs to the immunoglobulin superfamily. ICAM family.</text>
</comment>
<name>ICAM1_BOVIN</name>
<feature type="signal peptide" evidence="1">
    <location>
        <begin position="1"/>
        <end position="27"/>
    </location>
</feature>
<feature type="chain" id="PRO_0000014780" description="Intercellular adhesion molecule 1">
    <location>
        <begin position="28"/>
        <end position="535"/>
    </location>
</feature>
<feature type="topological domain" description="Extracellular" evidence="3">
    <location>
        <begin position="28"/>
        <end position="480"/>
    </location>
</feature>
<feature type="transmembrane region" description="Helical" evidence="3">
    <location>
        <begin position="481"/>
        <end position="503"/>
    </location>
</feature>
<feature type="topological domain" description="Cytoplasmic" evidence="3">
    <location>
        <begin position="504"/>
        <end position="535"/>
    </location>
</feature>
<feature type="domain" description="Ig-like C2-type 1">
    <location>
        <begin position="41"/>
        <end position="102"/>
    </location>
</feature>
<feature type="domain" description="Ig-like C2-type 2">
    <location>
        <begin position="127"/>
        <end position="193"/>
    </location>
</feature>
<feature type="domain" description="Ig-like C2-type 3">
    <location>
        <begin position="230"/>
        <end position="295"/>
    </location>
</feature>
<feature type="domain" description="Ig-like C2-type 4">
    <location>
        <begin position="323"/>
        <end position="376"/>
    </location>
</feature>
<feature type="domain" description="Ig-like C2-type 5">
    <location>
        <begin position="410"/>
        <end position="463"/>
    </location>
</feature>
<feature type="short sequence motif" description="Cell attachment site; atypical" evidence="3">
    <location>
        <begin position="151"/>
        <end position="153"/>
    </location>
</feature>
<feature type="modified residue" description="Phosphothreonine" evidence="2">
    <location>
        <position position="533"/>
    </location>
</feature>
<feature type="glycosylation site" description="N-linked (GlcNAc...) asparagine" evidence="3">
    <location>
        <position position="47"/>
    </location>
</feature>
<feature type="glycosylation site" description="N-linked (GlcNAc...) asparagine" evidence="3">
    <location>
        <position position="105"/>
    </location>
</feature>
<feature type="glycosylation site" description="N-linked (GlcNAc...) asparagine" evidence="3">
    <location>
        <position position="131"/>
    </location>
</feature>
<feature type="glycosylation site" description="N-linked (GlcNAc...) asparagine" evidence="3">
    <location>
        <position position="183"/>
    </location>
</feature>
<feature type="glycosylation site" description="N-linked (GlcNAc...) asparagine" evidence="3">
    <location>
        <position position="202"/>
    </location>
</feature>
<feature type="glycosylation site" description="N-linked (GlcNAc...) asparagine" evidence="3">
    <location>
        <position position="236"/>
    </location>
</feature>
<feature type="glycosylation site" description="N-linked (GlcNAc...) asparagine" evidence="3">
    <location>
        <position position="262"/>
    </location>
</feature>
<feature type="glycosylation site" description="N-linked (GlcNAc...) asparagine" evidence="3">
    <location>
        <position position="302"/>
    </location>
</feature>
<feature type="glycosylation site" description="N-linked (GlcNAc...) asparagine" evidence="3">
    <location>
        <position position="341"/>
    </location>
</feature>
<feature type="glycosylation site" description="N-linked (GlcNAc...) asparagine" evidence="3">
    <location>
        <position position="357"/>
    </location>
</feature>
<feature type="glycosylation site" description="N-linked (GlcNAc...) asparagine" evidence="3">
    <location>
        <position position="366"/>
    </location>
</feature>
<feature type="glycosylation site" description="N-linked (GlcNAc...) asparagine" evidence="3">
    <location>
        <position position="404"/>
    </location>
</feature>
<feature type="glycosylation site" description="N-linked (GlcNAc...) asparagine" evidence="3">
    <location>
        <position position="428"/>
    </location>
</feature>
<feature type="disulfide bond" evidence="4">
    <location>
        <begin position="48"/>
        <end position="91"/>
    </location>
</feature>
<feature type="disulfide bond" evidence="4">
    <location>
        <begin position="52"/>
        <end position="95"/>
    </location>
</feature>
<feature type="disulfide bond" evidence="4">
    <location>
        <begin position="134"/>
        <end position="186"/>
    </location>
</feature>
<feature type="disulfide bond" evidence="4">
    <location>
        <begin position="237"/>
        <end position="288"/>
    </location>
</feature>
<feature type="disulfide bond" evidence="4">
    <location>
        <begin position="330"/>
        <end position="369"/>
    </location>
</feature>
<feature type="disulfide bond" evidence="2">
    <location>
        <begin position="401"/>
        <end position="417"/>
    </location>
</feature>
<feature type="disulfide bond" evidence="4">
    <location>
        <begin position="417"/>
        <end position="456"/>
    </location>
</feature>
<feature type="disulfide bond" evidence="2">
    <location>
        <begin position="429"/>
        <end position="456"/>
    </location>
</feature>
<evidence type="ECO:0000250" key="1"/>
<evidence type="ECO:0000250" key="2">
    <source>
        <dbReference type="UniProtKB" id="P05362"/>
    </source>
</evidence>
<evidence type="ECO:0000255" key="3"/>
<evidence type="ECO:0000255" key="4">
    <source>
        <dbReference type="PROSITE-ProRule" id="PRU00114"/>
    </source>
</evidence>
<evidence type="ECO:0000305" key="5"/>